<reference key="1">
    <citation type="journal article" date="2004" name="Nucleic Acids Res.">
        <title>Comparative analysis of the Borrelia garinii genome.</title>
        <authorList>
            <person name="Gloeckner G."/>
            <person name="Lehmann R."/>
            <person name="Romualdi A."/>
            <person name="Pradella S."/>
            <person name="Schulte-Spechtel U."/>
            <person name="Schilhabel M."/>
            <person name="Wilske B."/>
            <person name="Suehnel J."/>
            <person name="Platzer M."/>
        </authorList>
    </citation>
    <scope>NUCLEOTIDE SEQUENCE [LARGE SCALE GENOMIC DNA]</scope>
    <source>
        <strain>ATCC BAA-2496 / DSM 23469 / PBi</strain>
    </source>
</reference>
<name>FOLD_BORGP</name>
<organism>
    <name type="scientific">Borrelia garinii subsp. bavariensis (strain ATCC BAA-2496 / DSM 23469 / PBi)</name>
    <name type="common">Borreliella bavariensis</name>
    <dbReference type="NCBI Taxonomy" id="290434"/>
    <lineage>
        <taxon>Bacteria</taxon>
        <taxon>Pseudomonadati</taxon>
        <taxon>Spirochaetota</taxon>
        <taxon>Spirochaetia</taxon>
        <taxon>Spirochaetales</taxon>
        <taxon>Borreliaceae</taxon>
        <taxon>Borreliella</taxon>
    </lineage>
</organism>
<feature type="chain" id="PRO_0000268291" description="Bifunctional protein FolD">
    <location>
        <begin position="1"/>
        <end position="301"/>
    </location>
</feature>
<feature type="binding site" evidence="1">
    <location>
        <begin position="164"/>
        <end position="166"/>
    </location>
    <ligand>
        <name>NADP(+)</name>
        <dbReference type="ChEBI" id="CHEBI:58349"/>
    </ligand>
</feature>
<feature type="binding site" evidence="1">
    <location>
        <position position="191"/>
    </location>
    <ligand>
        <name>NADP(+)</name>
        <dbReference type="ChEBI" id="CHEBI:58349"/>
    </ligand>
</feature>
<feature type="binding site" evidence="1">
    <location>
        <position position="232"/>
    </location>
    <ligand>
        <name>NADP(+)</name>
        <dbReference type="ChEBI" id="CHEBI:58349"/>
    </ligand>
</feature>
<gene>
    <name evidence="1" type="primary">folD</name>
    <name type="ordered locus">BG0026</name>
</gene>
<comment type="function">
    <text evidence="1">Catalyzes the oxidation of 5,10-methylenetetrahydrofolate to 5,10-methenyltetrahydrofolate and then the hydrolysis of 5,10-methenyltetrahydrofolate to 10-formyltetrahydrofolate.</text>
</comment>
<comment type="catalytic activity">
    <reaction evidence="1">
        <text>(6R)-5,10-methylene-5,6,7,8-tetrahydrofolate + NADP(+) = (6R)-5,10-methenyltetrahydrofolate + NADPH</text>
        <dbReference type="Rhea" id="RHEA:22812"/>
        <dbReference type="ChEBI" id="CHEBI:15636"/>
        <dbReference type="ChEBI" id="CHEBI:57455"/>
        <dbReference type="ChEBI" id="CHEBI:57783"/>
        <dbReference type="ChEBI" id="CHEBI:58349"/>
        <dbReference type="EC" id="1.5.1.5"/>
    </reaction>
</comment>
<comment type="catalytic activity">
    <reaction evidence="1">
        <text>(6R)-5,10-methenyltetrahydrofolate + H2O = (6R)-10-formyltetrahydrofolate + H(+)</text>
        <dbReference type="Rhea" id="RHEA:23700"/>
        <dbReference type="ChEBI" id="CHEBI:15377"/>
        <dbReference type="ChEBI" id="CHEBI:15378"/>
        <dbReference type="ChEBI" id="CHEBI:57455"/>
        <dbReference type="ChEBI" id="CHEBI:195366"/>
        <dbReference type="EC" id="3.5.4.9"/>
    </reaction>
</comment>
<comment type="pathway">
    <text evidence="1">One-carbon metabolism; tetrahydrofolate interconversion.</text>
</comment>
<comment type="subunit">
    <text evidence="1">Homodimer.</text>
</comment>
<comment type="similarity">
    <text evidence="1">Belongs to the tetrahydrofolate dehydrogenase/cyclohydrolase family.</text>
</comment>
<proteinExistence type="inferred from homology"/>
<keyword id="KW-0028">Amino-acid biosynthesis</keyword>
<keyword id="KW-0368">Histidine biosynthesis</keyword>
<keyword id="KW-0378">Hydrolase</keyword>
<keyword id="KW-0486">Methionine biosynthesis</keyword>
<keyword id="KW-0511">Multifunctional enzyme</keyword>
<keyword id="KW-0521">NADP</keyword>
<keyword id="KW-0554">One-carbon metabolism</keyword>
<keyword id="KW-0560">Oxidoreductase</keyword>
<keyword id="KW-0658">Purine biosynthesis</keyword>
<sequence length="301" mass="33222">MNTVFNGKDFANKYYLILKEFLKQHDLRDKIALKVVLANNEPASKLYVSIKNRVAKEIGLNVEVIKFSANSVQSDILEVIDRENKNLSTDGIIVQLPLLRHMDSNSILNSIVYSKDVDGLSFVNLGKMILGDKKGFIPCTALAVLKILLDEGIRTSGKTVVVVGRSPLVGKPISILLSSKPYDATVIVCHSKSIYLDVYLRQADIVISAVGKPKLIDKSMLCGEPYVIDIGISEIETDNGKILSGDTDFDNIKDCVKFITPVKGGIGPVTVLMLMFNTIKAHLINNNMFDILDRLEKLVEV</sequence>
<dbReference type="EC" id="1.5.1.5" evidence="1"/>
<dbReference type="EC" id="3.5.4.9" evidence="1"/>
<dbReference type="EMBL" id="CP000013">
    <property type="protein sequence ID" value="AAU06885.1"/>
    <property type="molecule type" value="Genomic_DNA"/>
</dbReference>
<dbReference type="RefSeq" id="WP_011193380.1">
    <property type="nucleotide sequence ID" value="NZ_CP028872.1"/>
</dbReference>
<dbReference type="SMR" id="Q662Y6"/>
<dbReference type="GeneID" id="45160825"/>
<dbReference type="KEGG" id="bga:BG0026"/>
<dbReference type="eggNOG" id="COG0190">
    <property type="taxonomic scope" value="Bacteria"/>
</dbReference>
<dbReference type="HOGENOM" id="CLU_034045_2_1_12"/>
<dbReference type="OrthoDB" id="9803580at2"/>
<dbReference type="UniPathway" id="UPA00193"/>
<dbReference type="Proteomes" id="UP000002276">
    <property type="component" value="Chromosome"/>
</dbReference>
<dbReference type="GO" id="GO:0005829">
    <property type="term" value="C:cytosol"/>
    <property type="evidence" value="ECO:0007669"/>
    <property type="project" value="TreeGrafter"/>
</dbReference>
<dbReference type="GO" id="GO:0004477">
    <property type="term" value="F:methenyltetrahydrofolate cyclohydrolase activity"/>
    <property type="evidence" value="ECO:0007669"/>
    <property type="project" value="UniProtKB-UniRule"/>
</dbReference>
<dbReference type="GO" id="GO:0004488">
    <property type="term" value="F:methylenetetrahydrofolate dehydrogenase (NADP+) activity"/>
    <property type="evidence" value="ECO:0007669"/>
    <property type="project" value="UniProtKB-UniRule"/>
</dbReference>
<dbReference type="GO" id="GO:0000105">
    <property type="term" value="P:L-histidine biosynthetic process"/>
    <property type="evidence" value="ECO:0007669"/>
    <property type="project" value="UniProtKB-KW"/>
</dbReference>
<dbReference type="GO" id="GO:0009086">
    <property type="term" value="P:methionine biosynthetic process"/>
    <property type="evidence" value="ECO:0007669"/>
    <property type="project" value="UniProtKB-KW"/>
</dbReference>
<dbReference type="GO" id="GO:0006164">
    <property type="term" value="P:purine nucleotide biosynthetic process"/>
    <property type="evidence" value="ECO:0007669"/>
    <property type="project" value="UniProtKB-KW"/>
</dbReference>
<dbReference type="GO" id="GO:0035999">
    <property type="term" value="P:tetrahydrofolate interconversion"/>
    <property type="evidence" value="ECO:0007669"/>
    <property type="project" value="UniProtKB-UniRule"/>
</dbReference>
<dbReference type="CDD" id="cd01080">
    <property type="entry name" value="NAD_bind_m-THF_DH_Cyclohyd"/>
    <property type="match status" value="1"/>
</dbReference>
<dbReference type="FunFam" id="3.40.50.10860:FF:000005">
    <property type="entry name" value="C-1-tetrahydrofolate synthase, cytoplasmic, putative"/>
    <property type="match status" value="1"/>
</dbReference>
<dbReference type="Gene3D" id="3.40.50.10860">
    <property type="entry name" value="Leucine Dehydrogenase, chain A, domain 1"/>
    <property type="match status" value="1"/>
</dbReference>
<dbReference type="Gene3D" id="3.40.50.720">
    <property type="entry name" value="NAD(P)-binding Rossmann-like Domain"/>
    <property type="match status" value="1"/>
</dbReference>
<dbReference type="HAMAP" id="MF_01576">
    <property type="entry name" value="THF_DHG_CYH"/>
    <property type="match status" value="1"/>
</dbReference>
<dbReference type="InterPro" id="IPR046346">
    <property type="entry name" value="Aminoacid_DH-like_N_sf"/>
</dbReference>
<dbReference type="InterPro" id="IPR036291">
    <property type="entry name" value="NAD(P)-bd_dom_sf"/>
</dbReference>
<dbReference type="InterPro" id="IPR000672">
    <property type="entry name" value="THF_DH/CycHdrlase"/>
</dbReference>
<dbReference type="InterPro" id="IPR020630">
    <property type="entry name" value="THF_DH/CycHdrlase_cat_dom"/>
</dbReference>
<dbReference type="InterPro" id="IPR020631">
    <property type="entry name" value="THF_DH/CycHdrlase_NAD-bd_dom"/>
</dbReference>
<dbReference type="PANTHER" id="PTHR48099:SF5">
    <property type="entry name" value="C-1-TETRAHYDROFOLATE SYNTHASE, CYTOPLASMIC"/>
    <property type="match status" value="1"/>
</dbReference>
<dbReference type="PANTHER" id="PTHR48099">
    <property type="entry name" value="C-1-TETRAHYDROFOLATE SYNTHASE, CYTOPLASMIC-RELATED"/>
    <property type="match status" value="1"/>
</dbReference>
<dbReference type="Pfam" id="PF00763">
    <property type="entry name" value="THF_DHG_CYH"/>
    <property type="match status" value="1"/>
</dbReference>
<dbReference type="Pfam" id="PF02882">
    <property type="entry name" value="THF_DHG_CYH_C"/>
    <property type="match status" value="1"/>
</dbReference>
<dbReference type="PRINTS" id="PR00085">
    <property type="entry name" value="THFDHDRGNASE"/>
</dbReference>
<dbReference type="SUPFAM" id="SSF53223">
    <property type="entry name" value="Aminoacid dehydrogenase-like, N-terminal domain"/>
    <property type="match status" value="1"/>
</dbReference>
<dbReference type="SUPFAM" id="SSF51735">
    <property type="entry name" value="NAD(P)-binding Rossmann-fold domains"/>
    <property type="match status" value="1"/>
</dbReference>
<evidence type="ECO:0000255" key="1">
    <source>
        <dbReference type="HAMAP-Rule" id="MF_01576"/>
    </source>
</evidence>
<protein>
    <recommendedName>
        <fullName evidence="1">Bifunctional protein FolD</fullName>
    </recommendedName>
    <domain>
        <recommendedName>
            <fullName evidence="1">Methylenetetrahydrofolate dehydrogenase</fullName>
            <ecNumber evidence="1">1.5.1.5</ecNumber>
        </recommendedName>
    </domain>
    <domain>
        <recommendedName>
            <fullName evidence="1">Methenyltetrahydrofolate cyclohydrolase</fullName>
            <ecNumber evidence="1">3.5.4.9</ecNumber>
        </recommendedName>
    </domain>
</protein>
<accession>Q662Y6</accession>